<feature type="chain" id="PRO_0000225022" description="UDP-N-acetylglucosamine--N-acetylmuramyl-(pentapeptide) pyrophosphoryl-undecaprenol N-acetylglucosamine transferase 2">
    <location>
        <begin position="1"/>
        <end position="352"/>
    </location>
</feature>
<feature type="binding site" evidence="1">
    <location>
        <begin position="11"/>
        <end position="13"/>
    </location>
    <ligand>
        <name>UDP-N-acetyl-alpha-D-glucosamine</name>
        <dbReference type="ChEBI" id="CHEBI:57705"/>
    </ligand>
</feature>
<feature type="binding site" evidence="1">
    <location>
        <position position="164"/>
    </location>
    <ligand>
        <name>UDP-N-acetyl-alpha-D-glucosamine</name>
        <dbReference type="ChEBI" id="CHEBI:57705"/>
    </ligand>
</feature>
<feature type="binding site" evidence="1">
    <location>
        <position position="194"/>
    </location>
    <ligand>
        <name>UDP-N-acetyl-alpha-D-glucosamine</name>
        <dbReference type="ChEBI" id="CHEBI:57705"/>
    </ligand>
</feature>
<feature type="binding site" evidence="1">
    <location>
        <position position="289"/>
    </location>
    <ligand>
        <name>UDP-N-acetyl-alpha-D-glucosamine</name>
        <dbReference type="ChEBI" id="CHEBI:57705"/>
    </ligand>
</feature>
<sequence>MKKIVFTGGGSAGHVTPNLAIIPHLQEQNWDISYIGSHQGIEKTIIEKEGIPYYSIASGKLRRYFDLKNIKDPFLVMKGVMDAYVRIRKLKPDVIFSKGGFVSVPVVIGGWLNRVPVLLHESDMTPGLANKIALRFASKIFVTFEEAAKHLPKEKVIYTGSPVREEVLKGNREKGLAFLGFSRKKPVITIMGGSLGAKKINETVREALPELLKKYQIVHLCGKGNLDESLQNKEGYRQFEYVHGELPDILAITDFVISRAGSNAIFEFLTLQKPMVLIPLSKFASRGDQILNAESFERQGYASVLYEEDVTVKSLIKHVEELNQNNEMYKTALKKYNGKEAIQTIIQHISEA</sequence>
<organism>
    <name type="scientific">Bacillus cereus (strain ATCC 10987 / NRS 248)</name>
    <dbReference type="NCBI Taxonomy" id="222523"/>
    <lineage>
        <taxon>Bacteria</taxon>
        <taxon>Bacillati</taxon>
        <taxon>Bacillota</taxon>
        <taxon>Bacilli</taxon>
        <taxon>Bacillales</taxon>
        <taxon>Bacillaceae</taxon>
        <taxon>Bacillus</taxon>
        <taxon>Bacillus cereus group</taxon>
    </lineage>
</organism>
<reference key="1">
    <citation type="journal article" date="2004" name="Nucleic Acids Res.">
        <title>The genome sequence of Bacillus cereus ATCC 10987 reveals metabolic adaptations and a large plasmid related to Bacillus anthracis pXO1.</title>
        <authorList>
            <person name="Rasko D.A."/>
            <person name="Ravel J."/>
            <person name="Oekstad O.A."/>
            <person name="Helgason E."/>
            <person name="Cer R.Z."/>
            <person name="Jiang L."/>
            <person name="Shores K.A."/>
            <person name="Fouts D.E."/>
            <person name="Tourasse N.J."/>
            <person name="Angiuoli S.V."/>
            <person name="Kolonay J.F."/>
            <person name="Nelson W.C."/>
            <person name="Kolstoe A.-B."/>
            <person name="Fraser C.M."/>
            <person name="Read T.D."/>
        </authorList>
    </citation>
    <scope>NUCLEOTIDE SEQUENCE [LARGE SCALE GENOMIC DNA]</scope>
    <source>
        <strain>ATCC 10987 / NRS 248</strain>
    </source>
</reference>
<proteinExistence type="inferred from homology"/>
<keyword id="KW-0131">Cell cycle</keyword>
<keyword id="KW-0132">Cell division</keyword>
<keyword id="KW-1003">Cell membrane</keyword>
<keyword id="KW-0133">Cell shape</keyword>
<keyword id="KW-0961">Cell wall biogenesis/degradation</keyword>
<keyword id="KW-0328">Glycosyltransferase</keyword>
<keyword id="KW-0472">Membrane</keyword>
<keyword id="KW-0573">Peptidoglycan synthesis</keyword>
<keyword id="KW-0808">Transferase</keyword>
<gene>
    <name evidence="1" type="primary">murG2</name>
    <name type="ordered locus">BCE_4331</name>
</gene>
<evidence type="ECO:0000255" key="1">
    <source>
        <dbReference type="HAMAP-Rule" id="MF_00033"/>
    </source>
</evidence>
<protein>
    <recommendedName>
        <fullName evidence="1">UDP-N-acetylglucosamine--N-acetylmuramyl-(pentapeptide) pyrophosphoryl-undecaprenol N-acetylglucosamine transferase 2</fullName>
        <ecNumber evidence="1">2.4.1.227</ecNumber>
    </recommendedName>
    <alternativeName>
        <fullName evidence="1">Undecaprenyl-PP-MurNAc-pentapeptide-UDPGlcNAc GlcNAc transferase 2</fullName>
    </alternativeName>
</protein>
<dbReference type="EC" id="2.4.1.227" evidence="1"/>
<dbReference type="EMBL" id="AE017194">
    <property type="protein sequence ID" value="AAS43232.1"/>
    <property type="molecule type" value="Genomic_DNA"/>
</dbReference>
<dbReference type="SMR" id="Q730T5"/>
<dbReference type="CAZy" id="GT28">
    <property type="family name" value="Glycosyltransferase Family 28"/>
</dbReference>
<dbReference type="KEGG" id="bca:BCE_4331"/>
<dbReference type="HOGENOM" id="CLU_037404_0_0_9"/>
<dbReference type="UniPathway" id="UPA00219"/>
<dbReference type="Proteomes" id="UP000002527">
    <property type="component" value="Chromosome"/>
</dbReference>
<dbReference type="GO" id="GO:0005886">
    <property type="term" value="C:plasma membrane"/>
    <property type="evidence" value="ECO:0007669"/>
    <property type="project" value="UniProtKB-SubCell"/>
</dbReference>
<dbReference type="GO" id="GO:0051991">
    <property type="term" value="F:UDP-N-acetyl-D-glucosamine:N-acetylmuramoyl-L-alanyl-D-glutamyl-meso-2,6-diaminopimelyl-D-alanyl-D-alanine-diphosphoundecaprenol 4-beta-N-acetylglucosaminlytransferase activity"/>
    <property type="evidence" value="ECO:0007669"/>
    <property type="project" value="RHEA"/>
</dbReference>
<dbReference type="GO" id="GO:0050511">
    <property type="term" value="F:undecaprenyldiphospho-muramoylpentapeptide beta-N-acetylglucosaminyltransferase activity"/>
    <property type="evidence" value="ECO:0007669"/>
    <property type="project" value="UniProtKB-UniRule"/>
</dbReference>
<dbReference type="GO" id="GO:0005975">
    <property type="term" value="P:carbohydrate metabolic process"/>
    <property type="evidence" value="ECO:0007669"/>
    <property type="project" value="InterPro"/>
</dbReference>
<dbReference type="GO" id="GO:0051301">
    <property type="term" value="P:cell division"/>
    <property type="evidence" value="ECO:0007669"/>
    <property type="project" value="UniProtKB-KW"/>
</dbReference>
<dbReference type="GO" id="GO:0071555">
    <property type="term" value="P:cell wall organization"/>
    <property type="evidence" value="ECO:0007669"/>
    <property type="project" value="UniProtKB-KW"/>
</dbReference>
<dbReference type="GO" id="GO:0030259">
    <property type="term" value="P:lipid glycosylation"/>
    <property type="evidence" value="ECO:0007669"/>
    <property type="project" value="UniProtKB-UniRule"/>
</dbReference>
<dbReference type="GO" id="GO:0009252">
    <property type="term" value="P:peptidoglycan biosynthetic process"/>
    <property type="evidence" value="ECO:0007669"/>
    <property type="project" value="UniProtKB-UniRule"/>
</dbReference>
<dbReference type="GO" id="GO:0008360">
    <property type="term" value="P:regulation of cell shape"/>
    <property type="evidence" value="ECO:0007669"/>
    <property type="project" value="UniProtKB-KW"/>
</dbReference>
<dbReference type="CDD" id="cd03785">
    <property type="entry name" value="GT28_MurG"/>
    <property type="match status" value="1"/>
</dbReference>
<dbReference type="Gene3D" id="3.40.50.2000">
    <property type="entry name" value="Glycogen Phosphorylase B"/>
    <property type="match status" value="2"/>
</dbReference>
<dbReference type="HAMAP" id="MF_00033">
    <property type="entry name" value="MurG"/>
    <property type="match status" value="1"/>
</dbReference>
<dbReference type="InterPro" id="IPR006009">
    <property type="entry name" value="GlcNAc_MurG"/>
</dbReference>
<dbReference type="InterPro" id="IPR007235">
    <property type="entry name" value="Glyco_trans_28_C"/>
</dbReference>
<dbReference type="InterPro" id="IPR004276">
    <property type="entry name" value="GlycoTrans_28_N"/>
</dbReference>
<dbReference type="NCBIfam" id="TIGR01133">
    <property type="entry name" value="murG"/>
    <property type="match status" value="1"/>
</dbReference>
<dbReference type="NCBIfam" id="NF009102">
    <property type="entry name" value="PRK12446.1"/>
    <property type="match status" value="1"/>
</dbReference>
<dbReference type="PANTHER" id="PTHR21015:SF27">
    <property type="entry name" value="UDP-N-ACETYLGLUCOSAMINE--N-ACETYLMURAMYL-(PENTAPEPTIDE) PYROPHOSPHORYL-UNDECAPRENOL N-ACETYLGLUCOSAMINE TRANSFERASE"/>
    <property type="match status" value="1"/>
</dbReference>
<dbReference type="PANTHER" id="PTHR21015">
    <property type="entry name" value="UDP-N-ACETYLGLUCOSAMINE--N-ACETYLMURAMYL-(PENTAPEPTIDE) PYROPHOSPHORYL-UNDECAPRENOL N-ACETYLGLUCOSAMINE TRANSFERASE 1"/>
    <property type="match status" value="1"/>
</dbReference>
<dbReference type="Pfam" id="PF04101">
    <property type="entry name" value="Glyco_tran_28_C"/>
    <property type="match status" value="1"/>
</dbReference>
<dbReference type="Pfam" id="PF03033">
    <property type="entry name" value="Glyco_transf_28"/>
    <property type="match status" value="1"/>
</dbReference>
<dbReference type="SUPFAM" id="SSF53756">
    <property type="entry name" value="UDP-Glycosyltransferase/glycogen phosphorylase"/>
    <property type="match status" value="1"/>
</dbReference>
<accession>Q730T5</accession>
<name>MURG2_BACC1</name>
<comment type="function">
    <text evidence="1">Cell wall formation. Catalyzes the transfer of a GlcNAc subunit on undecaprenyl-pyrophosphoryl-MurNAc-pentapeptide (lipid intermediate I) to form undecaprenyl-pyrophosphoryl-MurNAc-(pentapeptide)GlcNAc (lipid intermediate II).</text>
</comment>
<comment type="catalytic activity">
    <reaction evidence="1">
        <text>di-trans,octa-cis-undecaprenyl diphospho-N-acetyl-alpha-D-muramoyl-L-alanyl-D-glutamyl-meso-2,6-diaminopimeloyl-D-alanyl-D-alanine + UDP-N-acetyl-alpha-D-glucosamine = di-trans,octa-cis-undecaprenyl diphospho-[N-acetyl-alpha-D-glucosaminyl-(1-&gt;4)]-N-acetyl-alpha-D-muramoyl-L-alanyl-D-glutamyl-meso-2,6-diaminopimeloyl-D-alanyl-D-alanine + UDP + H(+)</text>
        <dbReference type="Rhea" id="RHEA:31227"/>
        <dbReference type="ChEBI" id="CHEBI:15378"/>
        <dbReference type="ChEBI" id="CHEBI:57705"/>
        <dbReference type="ChEBI" id="CHEBI:58223"/>
        <dbReference type="ChEBI" id="CHEBI:61387"/>
        <dbReference type="ChEBI" id="CHEBI:61388"/>
        <dbReference type="EC" id="2.4.1.227"/>
    </reaction>
</comment>
<comment type="pathway">
    <text evidence="1">Cell wall biogenesis; peptidoglycan biosynthesis.</text>
</comment>
<comment type="subcellular location">
    <subcellularLocation>
        <location evidence="1">Cell membrane</location>
        <topology evidence="1">Peripheral membrane protein</topology>
        <orientation evidence="1">Cytoplasmic side</orientation>
    </subcellularLocation>
</comment>
<comment type="similarity">
    <text evidence="1">Belongs to the glycosyltransferase 28 family. MurG subfamily.</text>
</comment>